<organism>
    <name type="scientific">Streptococcus pyogenes serotype M2 (strain MGAS10270)</name>
    <dbReference type="NCBI Taxonomy" id="370552"/>
    <lineage>
        <taxon>Bacteria</taxon>
        <taxon>Bacillati</taxon>
        <taxon>Bacillota</taxon>
        <taxon>Bacilli</taxon>
        <taxon>Lactobacillales</taxon>
        <taxon>Streptococcaceae</taxon>
        <taxon>Streptococcus</taxon>
    </lineage>
</organism>
<protein>
    <recommendedName>
        <fullName evidence="1">DNA mismatch repair protein MutS</fullName>
    </recommendedName>
</protein>
<keyword id="KW-0067">ATP-binding</keyword>
<keyword id="KW-0227">DNA damage</keyword>
<keyword id="KW-0234">DNA repair</keyword>
<keyword id="KW-0238">DNA-binding</keyword>
<keyword id="KW-0547">Nucleotide-binding</keyword>
<evidence type="ECO:0000255" key="1">
    <source>
        <dbReference type="HAMAP-Rule" id="MF_00096"/>
    </source>
</evidence>
<accession>Q1JEH0</accession>
<sequence length="851" mass="95550">MAKTNISPGMQQYLDIKKNYPDAFLLFRMGDFYELFYEDAVKAAQLLEIGLTSRNKNAENPIPMAGVPHHSAQQYIDVLIELGYKVAVAEQMEDPKQAVGVVKREVVQVITPGTVVDSAKPDSANNFLVAVDFDGCRYGLAYMDVSTGEFCVTDLADFTSVRSEIQNLKAKEVLLGFDLSEEEQTILVKQMNLLLSYEETVYEDKSLIDGQLTTVELTAAGKLLQYVHKTQMRELSHLQALVHYEIKDYLQMSYATKSSLDLVENARTNKKHGSLYWLLDETKTAMGMRLLRSWIDRPLVSKEAILERQEIIQVFLNAFIERTDLSNSLKGVYDIERLSSRVSFGKANPKDLLQLGHTLAQVPYIKAILESFDSPCVDKLVNDIDSLPELEYLIRTAIDPDAPATISEGSIIRNGFDERLDHYRKVMREGTGWIADIEAKERQESGINNLKIDYNKKDGYYFHVTNSNLSLVPEHFFRKATLKNSERYGTAELAKIEGQMLEAREESSSLEYDIFMCIRAQVETYINRLQKLAKTLATVDVLQSLAVVAETNHYIRPQFNDNHVITIQEGRHAVVEKVMGVQEYIPNSISFDQQTSIQLITGPNMSGKSTYMRQLALTVIMAQMGSFVAADHVDLPLFDAIFTRIGAADDLISGQSTFMVEMMEANQAIKRASDNSLILFDELGRGTATYDGMALAQAIIEYIHDRVGAKTIFATHYHELTDLSTKLTSLVNVHVATLEKDGDVTFLHKIAEGPADKSYGIHVAKIAGLPKSLLKRADEVLTRLETQSRSTEIMSVPPQVESSSAVRQGQLSLFGDDEKAHEIRQALEAIDVMNMTPFQAMTTLYELKKLL</sequence>
<proteinExistence type="inferred from homology"/>
<reference key="1">
    <citation type="journal article" date="2006" name="Proc. Natl. Acad. Sci. U.S.A.">
        <title>Molecular genetic anatomy of inter- and intraserotype variation in the human bacterial pathogen group A Streptococcus.</title>
        <authorList>
            <person name="Beres S.B."/>
            <person name="Richter E.W."/>
            <person name="Nagiec M.J."/>
            <person name="Sumby P."/>
            <person name="Porcella S.F."/>
            <person name="DeLeo F.R."/>
            <person name="Musser J.M."/>
        </authorList>
    </citation>
    <scope>NUCLEOTIDE SEQUENCE [LARGE SCALE GENOMIC DNA]</scope>
    <source>
        <strain>MGAS10270</strain>
    </source>
</reference>
<feature type="chain" id="PRO_1000008109" description="DNA mismatch repair protein MutS">
    <location>
        <begin position="1"/>
        <end position="851"/>
    </location>
</feature>
<feature type="binding site" evidence="1">
    <location>
        <begin position="602"/>
        <end position="609"/>
    </location>
    <ligand>
        <name>ATP</name>
        <dbReference type="ChEBI" id="CHEBI:30616"/>
    </ligand>
</feature>
<comment type="function">
    <text evidence="1">This protein is involved in the repair of mismatches in DNA. It is possible that it carries out the mismatch recognition step. This protein has a weak ATPase activity.</text>
</comment>
<comment type="similarity">
    <text evidence="1">Belongs to the DNA mismatch repair MutS family.</text>
</comment>
<name>MUTS_STRPD</name>
<gene>
    <name evidence="1" type="primary">mutS</name>
    <name type="ordered locus">MGAS10270_Spy1898</name>
</gene>
<dbReference type="EMBL" id="CP000260">
    <property type="protein sequence ID" value="ABF34963.1"/>
    <property type="molecule type" value="Genomic_DNA"/>
</dbReference>
<dbReference type="SMR" id="Q1JEH0"/>
<dbReference type="KEGG" id="sph:MGAS10270_Spy1898"/>
<dbReference type="HOGENOM" id="CLU_002472_3_1_9"/>
<dbReference type="Proteomes" id="UP000002436">
    <property type="component" value="Chromosome"/>
</dbReference>
<dbReference type="GO" id="GO:0005829">
    <property type="term" value="C:cytosol"/>
    <property type="evidence" value="ECO:0007669"/>
    <property type="project" value="TreeGrafter"/>
</dbReference>
<dbReference type="GO" id="GO:0005524">
    <property type="term" value="F:ATP binding"/>
    <property type="evidence" value="ECO:0007669"/>
    <property type="project" value="UniProtKB-UniRule"/>
</dbReference>
<dbReference type="GO" id="GO:0140664">
    <property type="term" value="F:ATP-dependent DNA damage sensor activity"/>
    <property type="evidence" value="ECO:0007669"/>
    <property type="project" value="InterPro"/>
</dbReference>
<dbReference type="GO" id="GO:0003684">
    <property type="term" value="F:damaged DNA binding"/>
    <property type="evidence" value="ECO:0007669"/>
    <property type="project" value="UniProtKB-UniRule"/>
</dbReference>
<dbReference type="GO" id="GO:0030983">
    <property type="term" value="F:mismatched DNA binding"/>
    <property type="evidence" value="ECO:0007669"/>
    <property type="project" value="InterPro"/>
</dbReference>
<dbReference type="GO" id="GO:0006298">
    <property type="term" value="P:mismatch repair"/>
    <property type="evidence" value="ECO:0007669"/>
    <property type="project" value="UniProtKB-UniRule"/>
</dbReference>
<dbReference type="CDD" id="cd03284">
    <property type="entry name" value="ABC_MutS1"/>
    <property type="match status" value="1"/>
</dbReference>
<dbReference type="FunFam" id="1.10.1420.10:FF:000001">
    <property type="entry name" value="DNA mismatch repair protein MutS"/>
    <property type="match status" value="1"/>
</dbReference>
<dbReference type="FunFam" id="3.40.1170.10:FF:000001">
    <property type="entry name" value="DNA mismatch repair protein MutS"/>
    <property type="match status" value="1"/>
</dbReference>
<dbReference type="FunFam" id="3.40.50.300:FF:000896">
    <property type="entry name" value="DNA mismatch repair protein MutS"/>
    <property type="match status" value="1"/>
</dbReference>
<dbReference type="Gene3D" id="1.10.1420.10">
    <property type="match status" value="2"/>
</dbReference>
<dbReference type="Gene3D" id="3.40.1170.10">
    <property type="entry name" value="DNA repair protein MutS, domain I"/>
    <property type="match status" value="1"/>
</dbReference>
<dbReference type="Gene3D" id="3.30.420.110">
    <property type="entry name" value="MutS, connector domain"/>
    <property type="match status" value="1"/>
</dbReference>
<dbReference type="Gene3D" id="3.40.50.300">
    <property type="entry name" value="P-loop containing nucleotide triphosphate hydrolases"/>
    <property type="match status" value="1"/>
</dbReference>
<dbReference type="HAMAP" id="MF_00096">
    <property type="entry name" value="MutS"/>
    <property type="match status" value="1"/>
</dbReference>
<dbReference type="InterPro" id="IPR005748">
    <property type="entry name" value="DNA_mismatch_repair_MutS"/>
</dbReference>
<dbReference type="InterPro" id="IPR007695">
    <property type="entry name" value="DNA_mismatch_repair_MutS-lik_N"/>
</dbReference>
<dbReference type="InterPro" id="IPR017261">
    <property type="entry name" value="DNA_mismatch_repair_MutS/MSH"/>
</dbReference>
<dbReference type="InterPro" id="IPR000432">
    <property type="entry name" value="DNA_mismatch_repair_MutS_C"/>
</dbReference>
<dbReference type="InterPro" id="IPR007861">
    <property type="entry name" value="DNA_mismatch_repair_MutS_clamp"/>
</dbReference>
<dbReference type="InterPro" id="IPR007696">
    <property type="entry name" value="DNA_mismatch_repair_MutS_core"/>
</dbReference>
<dbReference type="InterPro" id="IPR016151">
    <property type="entry name" value="DNA_mismatch_repair_MutS_N"/>
</dbReference>
<dbReference type="InterPro" id="IPR036187">
    <property type="entry name" value="DNA_mismatch_repair_MutS_sf"/>
</dbReference>
<dbReference type="InterPro" id="IPR007860">
    <property type="entry name" value="DNA_mmatch_repair_MutS_con_dom"/>
</dbReference>
<dbReference type="InterPro" id="IPR045076">
    <property type="entry name" value="MutS"/>
</dbReference>
<dbReference type="InterPro" id="IPR036678">
    <property type="entry name" value="MutS_con_dom_sf"/>
</dbReference>
<dbReference type="InterPro" id="IPR027417">
    <property type="entry name" value="P-loop_NTPase"/>
</dbReference>
<dbReference type="NCBIfam" id="TIGR01070">
    <property type="entry name" value="mutS1"/>
    <property type="match status" value="1"/>
</dbReference>
<dbReference type="NCBIfam" id="NF003810">
    <property type="entry name" value="PRK05399.1"/>
    <property type="match status" value="1"/>
</dbReference>
<dbReference type="PANTHER" id="PTHR11361:SF34">
    <property type="entry name" value="DNA MISMATCH REPAIR PROTEIN MSH1, MITOCHONDRIAL"/>
    <property type="match status" value="1"/>
</dbReference>
<dbReference type="PANTHER" id="PTHR11361">
    <property type="entry name" value="DNA MISMATCH REPAIR PROTEIN MUTS FAMILY MEMBER"/>
    <property type="match status" value="1"/>
</dbReference>
<dbReference type="Pfam" id="PF01624">
    <property type="entry name" value="MutS_I"/>
    <property type="match status" value="1"/>
</dbReference>
<dbReference type="Pfam" id="PF05188">
    <property type="entry name" value="MutS_II"/>
    <property type="match status" value="1"/>
</dbReference>
<dbReference type="Pfam" id="PF05192">
    <property type="entry name" value="MutS_III"/>
    <property type="match status" value="1"/>
</dbReference>
<dbReference type="Pfam" id="PF05190">
    <property type="entry name" value="MutS_IV"/>
    <property type="match status" value="1"/>
</dbReference>
<dbReference type="Pfam" id="PF00488">
    <property type="entry name" value="MutS_V"/>
    <property type="match status" value="1"/>
</dbReference>
<dbReference type="PIRSF" id="PIRSF037677">
    <property type="entry name" value="DNA_mis_repair_Msh6"/>
    <property type="match status" value="1"/>
</dbReference>
<dbReference type="SMART" id="SM00534">
    <property type="entry name" value="MUTSac"/>
    <property type="match status" value="1"/>
</dbReference>
<dbReference type="SMART" id="SM00533">
    <property type="entry name" value="MUTSd"/>
    <property type="match status" value="1"/>
</dbReference>
<dbReference type="SUPFAM" id="SSF55271">
    <property type="entry name" value="DNA repair protein MutS, domain I"/>
    <property type="match status" value="1"/>
</dbReference>
<dbReference type="SUPFAM" id="SSF53150">
    <property type="entry name" value="DNA repair protein MutS, domain II"/>
    <property type="match status" value="1"/>
</dbReference>
<dbReference type="SUPFAM" id="SSF48334">
    <property type="entry name" value="DNA repair protein MutS, domain III"/>
    <property type="match status" value="1"/>
</dbReference>
<dbReference type="SUPFAM" id="SSF52540">
    <property type="entry name" value="P-loop containing nucleoside triphosphate hydrolases"/>
    <property type="match status" value="1"/>
</dbReference>
<dbReference type="PROSITE" id="PS00486">
    <property type="entry name" value="DNA_MISMATCH_REPAIR_2"/>
    <property type="match status" value="1"/>
</dbReference>